<name>IOVO_PHAVE</name>
<reference key="1">
    <citation type="journal article" date="1987" name="Biochemistry">
        <title>Ovomucoid third domains from 100 avian species: isolation, sequences, and hypervariability of enzyme-inhibitor contact residues.</title>
        <authorList>
            <person name="Laskowski M. Jr."/>
            <person name="Kato I."/>
            <person name="Ardelt W."/>
            <person name="Cook J."/>
            <person name="Denton A."/>
            <person name="Empie M.W."/>
            <person name="Kohr W.J."/>
            <person name="Park S.J."/>
            <person name="Parks K."/>
            <person name="Schatzley B.L."/>
            <person name="Schoenberger O.L."/>
            <person name="Tashiro M."/>
            <person name="Vichot G."/>
            <person name="Whatley H.E."/>
            <person name="Wieczorek A."/>
            <person name="Wieczorek M."/>
        </authorList>
    </citation>
    <scope>PROTEIN SEQUENCE</scope>
</reference>
<evidence type="ECO:0000255" key="1">
    <source>
        <dbReference type="PROSITE-ProRule" id="PRU00798"/>
    </source>
</evidence>
<feature type="chain" id="PRO_0000073164" description="Ovomucoid">
    <location>
        <begin position="1" status="less than"/>
        <end position="56" status="greater than"/>
    </location>
</feature>
<feature type="domain" description="Kazal-like" evidence="1">
    <location>
        <begin position="6"/>
        <end position="56"/>
    </location>
</feature>
<feature type="site" description="Reactive bond 3">
    <location>
        <begin position="18"/>
        <end position="19"/>
    </location>
</feature>
<feature type="glycosylation site" description="N-linked (GlcNAc...) asparagine">
    <location>
        <position position="45"/>
    </location>
</feature>
<feature type="disulfide bond">
    <location>
        <begin position="8"/>
        <end position="38"/>
    </location>
</feature>
<feature type="disulfide bond">
    <location>
        <begin position="16"/>
        <end position="35"/>
    </location>
</feature>
<feature type="disulfide bond">
    <location>
        <begin position="24"/>
        <end position="56"/>
    </location>
</feature>
<feature type="non-terminal residue">
    <location>
        <position position="1"/>
    </location>
</feature>
<feature type="non-terminal residue">
    <location>
        <position position="56"/>
    </location>
</feature>
<comment type="subcellular location">
    <subcellularLocation>
        <location>Secreted</location>
    </subcellularLocation>
</comment>
<comment type="domain">
    <text>Avian ovomucoid consists of three homologous, tandem Kazal family inhibitory domains.</text>
</comment>
<keyword id="KW-0903">Direct protein sequencing</keyword>
<keyword id="KW-1015">Disulfide bond</keyword>
<keyword id="KW-0325">Glycoprotein</keyword>
<keyword id="KW-0646">Protease inhibitor</keyword>
<keyword id="KW-0677">Repeat</keyword>
<keyword id="KW-0964">Secreted</keyword>
<keyword id="KW-0722">Serine protease inhibitor</keyword>
<organism>
    <name type="scientific">Phasianus versicolor</name>
    <name type="common">Green pheasant</name>
    <dbReference type="NCBI Taxonomy" id="9055"/>
    <lineage>
        <taxon>Eukaryota</taxon>
        <taxon>Metazoa</taxon>
        <taxon>Chordata</taxon>
        <taxon>Craniata</taxon>
        <taxon>Vertebrata</taxon>
        <taxon>Euteleostomi</taxon>
        <taxon>Archelosauria</taxon>
        <taxon>Archosauria</taxon>
        <taxon>Dinosauria</taxon>
        <taxon>Saurischia</taxon>
        <taxon>Theropoda</taxon>
        <taxon>Coelurosauria</taxon>
        <taxon>Aves</taxon>
        <taxon>Neognathae</taxon>
        <taxon>Galloanserae</taxon>
        <taxon>Galliformes</taxon>
        <taxon>Phasianidae</taxon>
        <taxon>Phasianinae</taxon>
        <taxon>Phasianus</taxon>
    </lineage>
</organism>
<accession>P68471</accession>
<accession>P05603</accession>
<sequence length="56" mass="6085">LAAVSVDCSEYPKPACTMEYRPLCGSDNKTYGNKCNFCNAVVESNGTLTLNRFGQC</sequence>
<proteinExistence type="evidence at protein level"/>
<dbReference type="PIR" id="F31446">
    <property type="entry name" value="F31446"/>
</dbReference>
<dbReference type="SMR" id="P68471"/>
<dbReference type="GO" id="GO:0005615">
    <property type="term" value="C:extracellular space"/>
    <property type="evidence" value="ECO:0007669"/>
    <property type="project" value="UniProtKB-ARBA"/>
</dbReference>
<dbReference type="GO" id="GO:0004867">
    <property type="term" value="F:serine-type endopeptidase inhibitor activity"/>
    <property type="evidence" value="ECO:0007669"/>
    <property type="project" value="UniProtKB-KW"/>
</dbReference>
<dbReference type="CDD" id="cd00104">
    <property type="entry name" value="KAZAL_FS"/>
    <property type="match status" value="1"/>
</dbReference>
<dbReference type="FunFam" id="3.30.60.30:FF:000037">
    <property type="entry name" value="Ovomucoid"/>
    <property type="match status" value="1"/>
</dbReference>
<dbReference type="Gene3D" id="3.30.60.30">
    <property type="match status" value="1"/>
</dbReference>
<dbReference type="InterPro" id="IPR051597">
    <property type="entry name" value="Bifunctional_prot_inhibitor"/>
</dbReference>
<dbReference type="InterPro" id="IPR002350">
    <property type="entry name" value="Kazal_dom"/>
</dbReference>
<dbReference type="InterPro" id="IPR036058">
    <property type="entry name" value="Kazal_dom_sf"/>
</dbReference>
<dbReference type="InterPro" id="IPR001239">
    <property type="entry name" value="Prot_inh_Kazal-m"/>
</dbReference>
<dbReference type="PANTHER" id="PTHR47729:SF1">
    <property type="entry name" value="OVOMUCOID-LIKE-RELATED"/>
    <property type="match status" value="1"/>
</dbReference>
<dbReference type="PANTHER" id="PTHR47729">
    <property type="entry name" value="SERINE PEPTIDASE INHIBITOR, KAZAL TYPE 2, TANDEM DUPLICATE 1-RELATED"/>
    <property type="match status" value="1"/>
</dbReference>
<dbReference type="Pfam" id="PF00050">
    <property type="entry name" value="Kazal_1"/>
    <property type="match status" value="1"/>
</dbReference>
<dbReference type="PRINTS" id="PR00290">
    <property type="entry name" value="KAZALINHBTR"/>
</dbReference>
<dbReference type="SMART" id="SM00280">
    <property type="entry name" value="KAZAL"/>
    <property type="match status" value="1"/>
</dbReference>
<dbReference type="SUPFAM" id="SSF100895">
    <property type="entry name" value="Kazal-type serine protease inhibitors"/>
    <property type="match status" value="1"/>
</dbReference>
<dbReference type="PROSITE" id="PS00282">
    <property type="entry name" value="KAZAL_1"/>
    <property type="match status" value="1"/>
</dbReference>
<dbReference type="PROSITE" id="PS51465">
    <property type="entry name" value="KAZAL_2"/>
    <property type="match status" value="1"/>
</dbReference>
<protein>
    <recommendedName>
        <fullName>Ovomucoid</fullName>
    </recommendedName>
</protein>